<accession>P63590</accession>
<accession>Q48ZH6</accession>
<accession>Q9A0E5</accession>
<keyword id="KW-0002">3D-structure</keyword>
<keyword id="KW-0028">Amino-acid biosynthesis</keyword>
<keyword id="KW-0057">Aromatic amino acid biosynthesis</keyword>
<keyword id="KW-0456">Lyase</keyword>
<keyword id="KW-1185">Reference proteome</keyword>
<keyword id="KW-0704">Schiff base</keyword>
<gene>
    <name evidence="1" type="primary">aroD</name>
    <name type="ordered locus">SPy_0809</name>
    <name type="ordered locus">M5005_Spy0624</name>
</gene>
<sequence>MRIVAPVMPRHFDEAQAIDISKYEDVNLIEWRADFLPKDEIVAVAPAIFEKFAGKEIIFTLRTVQEGGNITLSSQEYVDIIKEINAIYNPDYIDFEYFTHKSVFQEMLDFPNLILSYHNFEETPENLMEAFSEMTKLAPRVVKIAVMPQSEQDVLDLMNYTRGFKTLNPEQEFATISMGKLGRLSRFAGDVIGSSWTYVSLDHVSGPGQVTLNDMKRIIEVLEMDISN</sequence>
<feature type="chain" id="PRO_0000138818" description="3-dehydroquinate dehydratase">
    <location>
        <begin position="1"/>
        <end position="228"/>
    </location>
</feature>
<feature type="active site" description="Proton donor/acceptor" evidence="1">
    <location>
        <position position="118"/>
    </location>
</feature>
<feature type="active site" description="Schiff-base intermediate with substrate" evidence="1">
    <location>
        <position position="143"/>
    </location>
</feature>
<feature type="binding site" evidence="1">
    <location>
        <begin position="30"/>
        <end position="32"/>
    </location>
    <ligand>
        <name>3-dehydroquinate</name>
        <dbReference type="ChEBI" id="CHEBI:32364"/>
    </ligand>
</feature>
<feature type="binding site" evidence="1">
    <location>
        <position position="62"/>
    </location>
    <ligand>
        <name>3-dehydroquinate</name>
        <dbReference type="ChEBI" id="CHEBI:32364"/>
    </ligand>
</feature>
<feature type="binding site" evidence="1">
    <location>
        <position position="186"/>
    </location>
    <ligand>
        <name>3-dehydroquinate</name>
        <dbReference type="ChEBI" id="CHEBI:32364"/>
    </ligand>
</feature>
<feature type="binding site" evidence="1">
    <location>
        <position position="205"/>
    </location>
    <ligand>
        <name>3-dehydroquinate</name>
        <dbReference type="ChEBI" id="CHEBI:32364"/>
    </ligand>
</feature>
<feature type="binding site" evidence="1">
    <location>
        <position position="209"/>
    </location>
    <ligand>
        <name>3-dehydroquinate</name>
        <dbReference type="ChEBI" id="CHEBI:32364"/>
    </ligand>
</feature>
<feature type="strand" evidence="2">
    <location>
        <begin position="2"/>
        <end position="7"/>
    </location>
</feature>
<feature type="helix" evidence="2">
    <location>
        <begin position="12"/>
        <end position="16"/>
    </location>
</feature>
<feature type="helix" evidence="2">
    <location>
        <begin position="20"/>
        <end position="23"/>
    </location>
</feature>
<feature type="strand" evidence="2">
    <location>
        <begin position="27"/>
        <end position="32"/>
    </location>
</feature>
<feature type="helix" evidence="2">
    <location>
        <begin position="33"/>
        <end position="35"/>
    </location>
</feature>
<feature type="helix" evidence="2">
    <location>
        <begin position="38"/>
        <end position="40"/>
    </location>
</feature>
<feature type="helix" evidence="2">
    <location>
        <begin position="41"/>
        <end position="51"/>
    </location>
</feature>
<feature type="turn" evidence="2">
    <location>
        <begin position="52"/>
        <end position="54"/>
    </location>
</feature>
<feature type="strand" evidence="2">
    <location>
        <begin position="55"/>
        <end position="60"/>
    </location>
</feature>
<feature type="helix" evidence="2">
    <location>
        <begin position="64"/>
        <end position="66"/>
    </location>
</feature>
<feature type="helix" evidence="2">
    <location>
        <begin position="74"/>
        <end position="88"/>
    </location>
</feature>
<feature type="strand" evidence="2">
    <location>
        <begin position="91"/>
        <end position="96"/>
    </location>
</feature>
<feature type="turn" evidence="2">
    <location>
        <begin position="97"/>
        <end position="100"/>
    </location>
</feature>
<feature type="helix" evidence="2">
    <location>
        <begin position="101"/>
        <end position="107"/>
    </location>
</feature>
<feature type="strand" evidence="2">
    <location>
        <begin position="111"/>
        <end position="121"/>
    </location>
</feature>
<feature type="helix" evidence="2">
    <location>
        <begin position="127"/>
        <end position="136"/>
    </location>
</feature>
<feature type="strand" evidence="2">
    <location>
        <begin position="140"/>
        <end position="146"/>
    </location>
</feature>
<feature type="helix" evidence="2">
    <location>
        <begin position="151"/>
        <end position="167"/>
    </location>
</feature>
<feature type="strand" evidence="2">
    <location>
        <begin position="172"/>
        <end position="177"/>
    </location>
</feature>
<feature type="helix" evidence="2">
    <location>
        <begin position="179"/>
        <end position="182"/>
    </location>
</feature>
<feature type="helix" evidence="2">
    <location>
        <begin position="183"/>
        <end position="187"/>
    </location>
</feature>
<feature type="helix" evidence="2">
    <location>
        <begin position="189"/>
        <end position="192"/>
    </location>
</feature>
<feature type="strand" evidence="2">
    <location>
        <begin position="196"/>
        <end position="198"/>
    </location>
</feature>
<feature type="helix" evidence="2">
    <location>
        <begin position="212"/>
        <end position="222"/>
    </location>
</feature>
<evidence type="ECO:0000255" key="1">
    <source>
        <dbReference type="HAMAP-Rule" id="MF_00214"/>
    </source>
</evidence>
<evidence type="ECO:0007829" key="2">
    <source>
        <dbReference type="PDB" id="2OCZ"/>
    </source>
</evidence>
<dbReference type="EC" id="4.2.1.10" evidence="1"/>
<dbReference type="EMBL" id="AE004092">
    <property type="protein sequence ID" value="AAK33746.1"/>
    <property type="molecule type" value="Genomic_DNA"/>
</dbReference>
<dbReference type="EMBL" id="CP000017">
    <property type="protein sequence ID" value="AAZ51242.1"/>
    <property type="molecule type" value="Genomic_DNA"/>
</dbReference>
<dbReference type="RefSeq" id="NP_269025.1">
    <property type="nucleotide sequence ID" value="NC_002737.2"/>
</dbReference>
<dbReference type="PDB" id="2OCZ">
    <property type="method" value="X-ray"/>
    <property type="resolution" value="1.85 A"/>
    <property type="chains" value="A=1-228"/>
</dbReference>
<dbReference type="PDBsum" id="2OCZ"/>
<dbReference type="SMR" id="P63590"/>
<dbReference type="PaxDb" id="1314-HKU360_00635"/>
<dbReference type="KEGG" id="spy:SPy_0809"/>
<dbReference type="KEGG" id="spz:M5005_Spy0624"/>
<dbReference type="PATRIC" id="fig|160490.10.peg.692"/>
<dbReference type="HOGENOM" id="CLU_064444_0_0_9"/>
<dbReference type="OMA" id="ATMAMGE"/>
<dbReference type="UniPathway" id="UPA00053">
    <property type="reaction ID" value="UER00086"/>
</dbReference>
<dbReference type="EvolutionaryTrace" id="P63590"/>
<dbReference type="Proteomes" id="UP000000750">
    <property type="component" value="Chromosome"/>
</dbReference>
<dbReference type="GO" id="GO:0003855">
    <property type="term" value="F:3-dehydroquinate dehydratase activity"/>
    <property type="evidence" value="ECO:0007669"/>
    <property type="project" value="UniProtKB-UniRule"/>
</dbReference>
<dbReference type="GO" id="GO:0046279">
    <property type="term" value="P:3,4-dihydroxybenzoate biosynthetic process"/>
    <property type="evidence" value="ECO:0007669"/>
    <property type="project" value="TreeGrafter"/>
</dbReference>
<dbReference type="GO" id="GO:0008652">
    <property type="term" value="P:amino acid biosynthetic process"/>
    <property type="evidence" value="ECO:0007669"/>
    <property type="project" value="UniProtKB-KW"/>
</dbReference>
<dbReference type="GO" id="GO:0009073">
    <property type="term" value="P:aromatic amino acid family biosynthetic process"/>
    <property type="evidence" value="ECO:0007669"/>
    <property type="project" value="UniProtKB-KW"/>
</dbReference>
<dbReference type="GO" id="GO:0009423">
    <property type="term" value="P:chorismate biosynthetic process"/>
    <property type="evidence" value="ECO:0007669"/>
    <property type="project" value="UniProtKB-UniRule"/>
</dbReference>
<dbReference type="CDD" id="cd00502">
    <property type="entry name" value="DHQase_I"/>
    <property type="match status" value="1"/>
</dbReference>
<dbReference type="Gene3D" id="3.20.20.70">
    <property type="entry name" value="Aldolase class I"/>
    <property type="match status" value="1"/>
</dbReference>
<dbReference type="HAMAP" id="MF_00214">
    <property type="entry name" value="AroD"/>
    <property type="match status" value="1"/>
</dbReference>
<dbReference type="InterPro" id="IPR013785">
    <property type="entry name" value="Aldolase_TIM"/>
</dbReference>
<dbReference type="InterPro" id="IPR001381">
    <property type="entry name" value="DHquinase_I"/>
</dbReference>
<dbReference type="InterPro" id="IPR050146">
    <property type="entry name" value="Type-I_3-dehydroquinase"/>
</dbReference>
<dbReference type="NCBIfam" id="TIGR01093">
    <property type="entry name" value="aroD"/>
    <property type="match status" value="1"/>
</dbReference>
<dbReference type="PANTHER" id="PTHR43699">
    <property type="entry name" value="3-DEHYDROQUINATE DEHYDRATASE"/>
    <property type="match status" value="1"/>
</dbReference>
<dbReference type="PANTHER" id="PTHR43699:SF1">
    <property type="entry name" value="3-DEHYDROQUINATE DEHYDRATASE"/>
    <property type="match status" value="1"/>
</dbReference>
<dbReference type="Pfam" id="PF01487">
    <property type="entry name" value="DHquinase_I"/>
    <property type="match status" value="1"/>
</dbReference>
<dbReference type="SUPFAM" id="SSF51569">
    <property type="entry name" value="Aldolase"/>
    <property type="match status" value="1"/>
</dbReference>
<protein>
    <recommendedName>
        <fullName evidence="1">3-dehydroquinate dehydratase</fullName>
        <shortName evidence="1">3-dehydroquinase</shortName>
        <ecNumber evidence="1">4.2.1.10</ecNumber>
    </recommendedName>
    <alternativeName>
        <fullName evidence="1">Type I DHQase</fullName>
    </alternativeName>
    <alternativeName>
        <fullName evidence="1">Type I dehydroquinase</fullName>
        <shortName evidence="1">DHQ1</shortName>
    </alternativeName>
</protein>
<organism>
    <name type="scientific">Streptococcus pyogenes serotype M1</name>
    <dbReference type="NCBI Taxonomy" id="301447"/>
    <lineage>
        <taxon>Bacteria</taxon>
        <taxon>Bacillati</taxon>
        <taxon>Bacillota</taxon>
        <taxon>Bacilli</taxon>
        <taxon>Lactobacillales</taxon>
        <taxon>Streptococcaceae</taxon>
        <taxon>Streptococcus</taxon>
    </lineage>
</organism>
<comment type="function">
    <text evidence="1">Involved in the third step of the chorismate pathway, which leads to the biosynthesis of aromatic amino acids. Catalyzes the cis-dehydration of 3-dehydroquinate (DHQ) and introduces the first double bond of the aromatic ring to yield 3-dehydroshikimate.</text>
</comment>
<comment type="catalytic activity">
    <reaction evidence="1">
        <text>3-dehydroquinate = 3-dehydroshikimate + H2O</text>
        <dbReference type="Rhea" id="RHEA:21096"/>
        <dbReference type="ChEBI" id="CHEBI:15377"/>
        <dbReference type="ChEBI" id="CHEBI:16630"/>
        <dbReference type="ChEBI" id="CHEBI:32364"/>
        <dbReference type="EC" id="4.2.1.10"/>
    </reaction>
</comment>
<comment type="pathway">
    <text evidence="1">Metabolic intermediate biosynthesis; chorismate biosynthesis; chorismate from D-erythrose 4-phosphate and phosphoenolpyruvate: step 3/7.</text>
</comment>
<comment type="subunit">
    <text evidence="1">Homodimer.</text>
</comment>
<comment type="similarity">
    <text evidence="1">Belongs to the type-I 3-dehydroquinase family.</text>
</comment>
<reference key="1">
    <citation type="journal article" date="2001" name="Proc. Natl. Acad. Sci. U.S.A.">
        <title>Complete genome sequence of an M1 strain of Streptococcus pyogenes.</title>
        <authorList>
            <person name="Ferretti J.J."/>
            <person name="McShan W.M."/>
            <person name="Ajdic D.J."/>
            <person name="Savic D.J."/>
            <person name="Savic G."/>
            <person name="Lyon K."/>
            <person name="Primeaux C."/>
            <person name="Sezate S."/>
            <person name="Suvorov A.N."/>
            <person name="Kenton S."/>
            <person name="Lai H.S."/>
            <person name="Lin S.P."/>
            <person name="Qian Y."/>
            <person name="Jia H.G."/>
            <person name="Najar F.Z."/>
            <person name="Ren Q."/>
            <person name="Zhu H."/>
            <person name="Song L."/>
            <person name="White J."/>
            <person name="Yuan X."/>
            <person name="Clifton S.W."/>
            <person name="Roe B.A."/>
            <person name="McLaughlin R.E."/>
        </authorList>
    </citation>
    <scope>NUCLEOTIDE SEQUENCE [LARGE SCALE GENOMIC DNA]</scope>
    <source>
        <strain>ATCC 700294 / SF370 / Serotype M1</strain>
    </source>
</reference>
<reference key="2">
    <citation type="journal article" date="2005" name="J. Infect. Dis.">
        <title>Evolutionary origin and emergence of a highly successful clone of serotype M1 group A Streptococcus involved multiple horizontal gene transfer events.</title>
        <authorList>
            <person name="Sumby P."/>
            <person name="Porcella S.F."/>
            <person name="Madrigal A.G."/>
            <person name="Barbian K.D."/>
            <person name="Virtaneva K."/>
            <person name="Ricklefs S.M."/>
            <person name="Sturdevant D.E."/>
            <person name="Graham M.R."/>
            <person name="Vuopio-Varkila J."/>
            <person name="Hoe N.P."/>
            <person name="Musser J.M."/>
        </authorList>
    </citation>
    <scope>NUCLEOTIDE SEQUENCE [LARGE SCALE GENOMIC DNA]</scope>
    <source>
        <strain>ATCC BAA-947 / MGAS5005 / Serotype M1</strain>
    </source>
</reference>
<reference key="3">
    <citation type="submission" date="2011-07" db="PDB data bank">
        <title>The structure of a putative 3-dehydroquinate dehydratase from Streptococcus pyogenes.</title>
        <authorList>
            <consortium name="Midwest center for structural genomics (MCSG)"/>
        </authorList>
    </citation>
    <scope>X-RAY CRYSTALLOGRAPHY (1.85 ANGSTROMS)</scope>
</reference>
<proteinExistence type="evidence at protein level"/>
<name>AROD_STRP1</name>